<evidence type="ECO:0000255" key="1">
    <source>
        <dbReference type="PROSITE-ProRule" id="PRU00094"/>
    </source>
</evidence>
<evidence type="ECO:0000256" key="2">
    <source>
        <dbReference type="SAM" id="MobiDB-lite"/>
    </source>
</evidence>
<keyword id="KW-0010">Activator</keyword>
<keyword id="KW-0238">DNA-binding</keyword>
<keyword id="KW-0479">Metal-binding</keyword>
<keyword id="KW-0539">Nucleus</keyword>
<keyword id="KW-1185">Reference proteome</keyword>
<keyword id="KW-0677">Repeat</keyword>
<keyword id="KW-0804">Transcription</keyword>
<keyword id="KW-0805">Transcription regulation</keyword>
<keyword id="KW-0862">Zinc</keyword>
<keyword id="KW-0863">Zinc-finger</keyword>
<name>GATA3_DANRE</name>
<feature type="chain" id="PRO_0000083411" description="Transcription factor GATA-3">
    <location>
        <begin position="1"/>
        <end position="438"/>
    </location>
</feature>
<feature type="zinc finger region" description="GATA-type 1" evidence="1">
    <location>
        <begin position="256"/>
        <end position="280"/>
    </location>
</feature>
<feature type="zinc finger region" description="GATA-type 2" evidence="1">
    <location>
        <begin position="310"/>
        <end position="334"/>
    </location>
</feature>
<feature type="region of interest" description="Disordered" evidence="2">
    <location>
        <begin position="1"/>
        <end position="27"/>
    </location>
</feature>
<feature type="region of interest" description="Disordered" evidence="2">
    <location>
        <begin position="100"/>
        <end position="173"/>
    </location>
</feature>
<feature type="region of interest" description="Disordered" evidence="2">
    <location>
        <begin position="232"/>
        <end position="255"/>
    </location>
</feature>
<feature type="region of interest" description="Disordered" evidence="2">
    <location>
        <begin position="350"/>
        <end position="378"/>
    </location>
</feature>
<feature type="region of interest" description="Disordered" evidence="2">
    <location>
        <begin position="405"/>
        <end position="438"/>
    </location>
</feature>
<feature type="compositionally biased region" description="Low complexity" evidence="2">
    <location>
        <begin position="122"/>
        <end position="142"/>
    </location>
</feature>
<feature type="compositionally biased region" description="Polar residues" evidence="2">
    <location>
        <begin position="160"/>
        <end position="169"/>
    </location>
</feature>
<feature type="compositionally biased region" description="Low complexity" evidence="2">
    <location>
        <begin position="232"/>
        <end position="241"/>
    </location>
</feature>
<feature type="compositionally biased region" description="Basic residues" evidence="2">
    <location>
        <begin position="357"/>
        <end position="370"/>
    </location>
</feature>
<feature type="compositionally biased region" description="Polar residues" evidence="2">
    <location>
        <begin position="410"/>
        <end position="438"/>
    </location>
</feature>
<protein>
    <recommendedName>
        <fullName>Transcription factor GATA-3</fullName>
    </recommendedName>
    <alternativeName>
        <fullName>GATA-binding factor 3</fullName>
    </alternativeName>
</protein>
<sequence>MEVSPEQHRWVTHHTVGQHPETHHPGLGHSYMDPSQYQLAEDVDVLFNIDGQSNHPYYGNPVRAVQRYPPPPHSSQMCRPSLLHGSLPWLDGGKSIGPHHSTSPWNLGPFPKTSLHHSSPGPLSVYPPASSSSLSAGHSSPHLFTFPPTPPKDVSPDPAISTSGSGSSVRQEDKECIKYQVSLAESMKLDSAHSRSMASIGAGASSAHHPIATYPSYVPDYGPGLFPPSSLIGGSSSSYGSKTRPKTRSSSEGRECVNCGATSTPLWRRDGTGHYLCNACGLYHKMNGQNRPLIKPKRRLSAARRAGTSCANCQTTTTTLWRRNANGDPVCNACGLYYKLHNINRPLTMKKEGIQTRNRKMSSKSKKSKKSHDSMEDFSKSLMEKNSSFSPAALSRHMTSFPPFSHSGHMLTTPTPMHPSSSLPFASHHPSSMVTAMG</sequence>
<reference key="1">
    <citation type="journal article" date="1995" name="Mech. Dev.">
        <title>Expression of zebrafish GATA 3 (gta3) during gastrulation and neurulation suggests a role in the specification of cell fate.</title>
        <authorList>
            <person name="Neave B."/>
            <person name="Rodaway A."/>
            <person name="Wilson S.W."/>
            <person name="Patient R."/>
            <person name="Holder N."/>
        </authorList>
    </citation>
    <scope>NUCLEOTIDE SEQUENCE [MRNA]</scope>
</reference>
<reference key="2">
    <citation type="journal article" date="2013" name="Nature">
        <title>The zebrafish reference genome sequence and its relationship to the human genome.</title>
        <authorList>
            <person name="Howe K."/>
            <person name="Clark M.D."/>
            <person name="Torroja C.F."/>
            <person name="Torrance J."/>
            <person name="Berthelot C."/>
            <person name="Muffato M."/>
            <person name="Collins J.E."/>
            <person name="Humphray S."/>
            <person name="McLaren K."/>
            <person name="Matthews L."/>
            <person name="McLaren S."/>
            <person name="Sealy I."/>
            <person name="Caccamo M."/>
            <person name="Churcher C."/>
            <person name="Scott C."/>
            <person name="Barrett J.C."/>
            <person name="Koch R."/>
            <person name="Rauch G.J."/>
            <person name="White S."/>
            <person name="Chow W."/>
            <person name="Kilian B."/>
            <person name="Quintais L.T."/>
            <person name="Guerra-Assuncao J.A."/>
            <person name="Zhou Y."/>
            <person name="Gu Y."/>
            <person name="Yen J."/>
            <person name="Vogel J.H."/>
            <person name="Eyre T."/>
            <person name="Redmond S."/>
            <person name="Banerjee R."/>
            <person name="Chi J."/>
            <person name="Fu B."/>
            <person name="Langley E."/>
            <person name="Maguire S.F."/>
            <person name="Laird G.K."/>
            <person name="Lloyd D."/>
            <person name="Kenyon E."/>
            <person name="Donaldson S."/>
            <person name="Sehra H."/>
            <person name="Almeida-King J."/>
            <person name="Loveland J."/>
            <person name="Trevanion S."/>
            <person name="Jones M."/>
            <person name="Quail M."/>
            <person name="Willey D."/>
            <person name="Hunt A."/>
            <person name="Burton J."/>
            <person name="Sims S."/>
            <person name="McLay K."/>
            <person name="Plumb B."/>
            <person name="Davis J."/>
            <person name="Clee C."/>
            <person name="Oliver K."/>
            <person name="Clark R."/>
            <person name="Riddle C."/>
            <person name="Elliot D."/>
            <person name="Threadgold G."/>
            <person name="Harden G."/>
            <person name="Ware D."/>
            <person name="Begum S."/>
            <person name="Mortimore B."/>
            <person name="Kerry G."/>
            <person name="Heath P."/>
            <person name="Phillimore B."/>
            <person name="Tracey A."/>
            <person name="Corby N."/>
            <person name="Dunn M."/>
            <person name="Johnson C."/>
            <person name="Wood J."/>
            <person name="Clark S."/>
            <person name="Pelan S."/>
            <person name="Griffiths G."/>
            <person name="Smith M."/>
            <person name="Glithero R."/>
            <person name="Howden P."/>
            <person name="Barker N."/>
            <person name="Lloyd C."/>
            <person name="Stevens C."/>
            <person name="Harley J."/>
            <person name="Holt K."/>
            <person name="Panagiotidis G."/>
            <person name="Lovell J."/>
            <person name="Beasley H."/>
            <person name="Henderson C."/>
            <person name="Gordon D."/>
            <person name="Auger K."/>
            <person name="Wright D."/>
            <person name="Collins J."/>
            <person name="Raisen C."/>
            <person name="Dyer L."/>
            <person name="Leung K."/>
            <person name="Robertson L."/>
            <person name="Ambridge K."/>
            <person name="Leongamornlert D."/>
            <person name="McGuire S."/>
            <person name="Gilderthorp R."/>
            <person name="Griffiths C."/>
            <person name="Manthravadi D."/>
            <person name="Nichol S."/>
            <person name="Barker G."/>
            <person name="Whitehead S."/>
            <person name="Kay M."/>
            <person name="Brown J."/>
            <person name="Murnane C."/>
            <person name="Gray E."/>
            <person name="Humphries M."/>
            <person name="Sycamore N."/>
            <person name="Barker D."/>
            <person name="Saunders D."/>
            <person name="Wallis J."/>
            <person name="Babbage A."/>
            <person name="Hammond S."/>
            <person name="Mashreghi-Mohammadi M."/>
            <person name="Barr L."/>
            <person name="Martin S."/>
            <person name="Wray P."/>
            <person name="Ellington A."/>
            <person name="Matthews N."/>
            <person name="Ellwood M."/>
            <person name="Woodmansey R."/>
            <person name="Clark G."/>
            <person name="Cooper J."/>
            <person name="Tromans A."/>
            <person name="Grafham D."/>
            <person name="Skuce C."/>
            <person name="Pandian R."/>
            <person name="Andrews R."/>
            <person name="Harrison E."/>
            <person name="Kimberley A."/>
            <person name="Garnett J."/>
            <person name="Fosker N."/>
            <person name="Hall R."/>
            <person name="Garner P."/>
            <person name="Kelly D."/>
            <person name="Bird C."/>
            <person name="Palmer S."/>
            <person name="Gehring I."/>
            <person name="Berger A."/>
            <person name="Dooley C.M."/>
            <person name="Ersan-Urun Z."/>
            <person name="Eser C."/>
            <person name="Geiger H."/>
            <person name="Geisler M."/>
            <person name="Karotki L."/>
            <person name="Kirn A."/>
            <person name="Konantz J."/>
            <person name="Konantz M."/>
            <person name="Oberlander M."/>
            <person name="Rudolph-Geiger S."/>
            <person name="Teucke M."/>
            <person name="Lanz C."/>
            <person name="Raddatz G."/>
            <person name="Osoegawa K."/>
            <person name="Zhu B."/>
            <person name="Rapp A."/>
            <person name="Widaa S."/>
            <person name="Langford C."/>
            <person name="Yang F."/>
            <person name="Schuster S.C."/>
            <person name="Carter N.P."/>
            <person name="Harrow J."/>
            <person name="Ning Z."/>
            <person name="Herrero J."/>
            <person name="Searle S.M."/>
            <person name="Enright A."/>
            <person name="Geisler R."/>
            <person name="Plasterk R.H."/>
            <person name="Lee C."/>
            <person name="Westerfield M."/>
            <person name="de Jong P.J."/>
            <person name="Zon L.I."/>
            <person name="Postlethwait J.H."/>
            <person name="Nusslein-Volhard C."/>
            <person name="Hubbard T.J."/>
            <person name="Roest Crollius H."/>
            <person name="Rogers J."/>
            <person name="Stemple D.L."/>
        </authorList>
    </citation>
    <scope>NUCLEOTIDE SEQUENCE [LARGE SCALE GENOMIC DNA]</scope>
    <source>
        <strain>Tuebingen</strain>
    </source>
</reference>
<proteinExistence type="evidence at transcript level"/>
<comment type="subcellular location">
    <subcellularLocation>
        <location>Nucleus</location>
    </subcellularLocation>
</comment>
<comment type="developmental stage">
    <text>Expressed during gastrulation in the ventral region of the embryo which includes tissue fated to form the non-neural ectoderm.</text>
</comment>
<dbReference type="EMBL" id="S80425">
    <property type="protein sequence ID" value="AAA93491.1"/>
    <property type="molecule type" value="mRNA"/>
</dbReference>
<dbReference type="EMBL" id="BX901908">
    <property type="protein sequence ID" value="CAH69073.1"/>
    <property type="molecule type" value="Genomic_DNA"/>
</dbReference>
<dbReference type="RefSeq" id="NP_571286.1">
    <property type="nucleotide sequence ID" value="NM_131211.1"/>
</dbReference>
<dbReference type="RefSeq" id="XP_005164862.1">
    <property type="nucleotide sequence ID" value="XM_005164805.5"/>
</dbReference>
<dbReference type="SMR" id="Q91428"/>
<dbReference type="FunCoup" id="Q91428">
    <property type="interactions" value="120"/>
</dbReference>
<dbReference type="STRING" id="7955.ENSDARP00000017572"/>
<dbReference type="PaxDb" id="7955-ENSDARP00000017572"/>
<dbReference type="Ensembl" id="ENSDART00000025153">
    <property type="protein sequence ID" value="ENSDARP00000017572"/>
    <property type="gene ID" value="ENSDARG00000016526"/>
</dbReference>
<dbReference type="GeneID" id="30458"/>
<dbReference type="KEGG" id="dre:30458"/>
<dbReference type="AGR" id="ZFIN:ZDB-GENE-990415-82"/>
<dbReference type="CTD" id="2625"/>
<dbReference type="ZFIN" id="ZDB-GENE-990415-82">
    <property type="gene designation" value="gata3"/>
</dbReference>
<dbReference type="eggNOG" id="KOG1601">
    <property type="taxonomic scope" value="Eukaryota"/>
</dbReference>
<dbReference type="HOGENOM" id="CLU_027524_1_0_1"/>
<dbReference type="InParanoid" id="Q91428"/>
<dbReference type="OMA" id="ECVKYQV"/>
<dbReference type="OrthoDB" id="2162994at2759"/>
<dbReference type="PhylomeDB" id="Q91428"/>
<dbReference type="TreeFam" id="TF315391"/>
<dbReference type="Reactome" id="R-DRE-9018519">
    <property type="pathway name" value="Estrogen-dependent gene expression"/>
</dbReference>
<dbReference type="Reactome" id="R-DRE-983231">
    <property type="pathway name" value="Factors involved in megakaryocyte development and platelet production"/>
</dbReference>
<dbReference type="PRO" id="PR:Q91428"/>
<dbReference type="Proteomes" id="UP000000437">
    <property type="component" value="Chromosome 4"/>
</dbReference>
<dbReference type="Bgee" id="ENSDARG00000016526">
    <property type="expression patterns" value="Expressed in pharyngeal gill and 68 other cell types or tissues"/>
</dbReference>
<dbReference type="ExpressionAtlas" id="Q91428">
    <property type="expression patterns" value="baseline"/>
</dbReference>
<dbReference type="GO" id="GO:0005634">
    <property type="term" value="C:nucleus"/>
    <property type="evidence" value="ECO:0000318"/>
    <property type="project" value="GO_Central"/>
</dbReference>
<dbReference type="GO" id="GO:0000981">
    <property type="term" value="F:DNA-binding transcription factor activity, RNA polymerase II-specific"/>
    <property type="evidence" value="ECO:0000318"/>
    <property type="project" value="GO_Central"/>
</dbReference>
<dbReference type="GO" id="GO:0000978">
    <property type="term" value="F:RNA polymerase II cis-regulatory region sequence-specific DNA binding"/>
    <property type="evidence" value="ECO:0000318"/>
    <property type="project" value="GO_Central"/>
</dbReference>
<dbReference type="GO" id="GO:0008270">
    <property type="term" value="F:zinc ion binding"/>
    <property type="evidence" value="ECO:0007669"/>
    <property type="project" value="UniProtKB-KW"/>
</dbReference>
<dbReference type="GO" id="GO:0061026">
    <property type="term" value="P:cardiac muscle tissue regeneration"/>
    <property type="evidence" value="ECO:0000315"/>
    <property type="project" value="ZFIN"/>
</dbReference>
<dbReference type="GO" id="GO:0045165">
    <property type="term" value="P:cell fate commitment"/>
    <property type="evidence" value="ECO:0000318"/>
    <property type="project" value="GO_Central"/>
</dbReference>
<dbReference type="GO" id="GO:0071696">
    <property type="term" value="P:ectodermal placode development"/>
    <property type="evidence" value="ECO:0000315"/>
    <property type="project" value="ZFIN"/>
</dbReference>
<dbReference type="GO" id="GO:0060788">
    <property type="term" value="P:ectodermal placode formation"/>
    <property type="evidence" value="ECO:0000316"/>
    <property type="project" value="ZFIN"/>
</dbReference>
<dbReference type="GO" id="GO:0048702">
    <property type="term" value="P:embryonic neurocranium morphogenesis"/>
    <property type="evidence" value="ECO:0000315"/>
    <property type="project" value="ZFIN"/>
</dbReference>
<dbReference type="GO" id="GO:0048568">
    <property type="term" value="P:embryonic organ development"/>
    <property type="evidence" value="ECO:0000318"/>
    <property type="project" value="GO_Central"/>
</dbReference>
<dbReference type="GO" id="GO:0008543">
    <property type="term" value="P:fibroblast growth factor receptor signaling pathway"/>
    <property type="evidence" value="ECO:0000314"/>
    <property type="project" value="UniProtKB"/>
</dbReference>
<dbReference type="GO" id="GO:0031101">
    <property type="term" value="P:fin regeneration"/>
    <property type="evidence" value="ECO:0000315"/>
    <property type="project" value="UniProtKB"/>
</dbReference>
<dbReference type="GO" id="GO:0002520">
    <property type="term" value="P:immune system development"/>
    <property type="evidence" value="ECO:0000318"/>
    <property type="project" value="GO_Central"/>
</dbReference>
<dbReference type="GO" id="GO:0000122">
    <property type="term" value="P:negative regulation of transcription by RNA polymerase II"/>
    <property type="evidence" value="ECO:0000318"/>
    <property type="project" value="GO_Central"/>
</dbReference>
<dbReference type="GO" id="GO:0043049">
    <property type="term" value="P:otic placode formation"/>
    <property type="evidence" value="ECO:0000316"/>
    <property type="project" value="ZFIN"/>
</dbReference>
<dbReference type="GO" id="GO:0008284">
    <property type="term" value="P:positive regulation of cell population proliferation"/>
    <property type="evidence" value="ECO:0000315"/>
    <property type="project" value="UniProtKB"/>
</dbReference>
<dbReference type="GO" id="GO:0050769">
    <property type="term" value="P:positive regulation of neurogenesis"/>
    <property type="evidence" value="ECO:0000315"/>
    <property type="project" value="UniProtKB"/>
</dbReference>
<dbReference type="GO" id="GO:2001224">
    <property type="term" value="P:positive regulation of neuron migration"/>
    <property type="evidence" value="ECO:0000315"/>
    <property type="project" value="UniProtKB"/>
</dbReference>
<dbReference type="GO" id="GO:0045944">
    <property type="term" value="P:positive regulation of transcription by RNA polymerase II"/>
    <property type="evidence" value="ECO:0000318"/>
    <property type="project" value="GO_Central"/>
</dbReference>
<dbReference type="GO" id="GO:0030856">
    <property type="term" value="P:regulation of epithelial cell differentiation"/>
    <property type="evidence" value="ECO:0000318"/>
    <property type="project" value="GO_Central"/>
</dbReference>
<dbReference type="GO" id="GO:0042246">
    <property type="term" value="P:tissue regeneration"/>
    <property type="evidence" value="ECO:0000315"/>
    <property type="project" value="ZFIN"/>
</dbReference>
<dbReference type="GO" id="GO:0021514">
    <property type="term" value="P:ventral spinal cord interneuron differentiation"/>
    <property type="evidence" value="ECO:0000315"/>
    <property type="project" value="ZFIN"/>
</dbReference>
<dbReference type="CDD" id="cd00202">
    <property type="entry name" value="ZnF_GATA"/>
    <property type="match status" value="2"/>
</dbReference>
<dbReference type="FunFam" id="3.30.50.10:FF:000001">
    <property type="entry name" value="GATA transcription factor (GATAd)"/>
    <property type="match status" value="1"/>
</dbReference>
<dbReference type="FunFam" id="3.30.50.10:FF:000032">
    <property type="entry name" value="Transcription factor GATA-3"/>
    <property type="match status" value="1"/>
</dbReference>
<dbReference type="Gene3D" id="3.30.50.10">
    <property type="entry name" value="Erythroid Transcription Factor GATA-1, subunit A"/>
    <property type="match status" value="2"/>
</dbReference>
<dbReference type="InterPro" id="IPR016374">
    <property type="entry name" value="TF_GATA-2/3"/>
</dbReference>
<dbReference type="InterPro" id="IPR039355">
    <property type="entry name" value="Transcription_factor_GATA"/>
</dbReference>
<dbReference type="InterPro" id="IPR000679">
    <property type="entry name" value="Znf_GATA"/>
</dbReference>
<dbReference type="InterPro" id="IPR013088">
    <property type="entry name" value="Znf_NHR/GATA"/>
</dbReference>
<dbReference type="PANTHER" id="PTHR10071:SF106">
    <property type="entry name" value="TRANS-ACTING T-CELL-SPECIFIC TRANSCRIPTION FACTOR GATA-3"/>
    <property type="match status" value="1"/>
</dbReference>
<dbReference type="PANTHER" id="PTHR10071">
    <property type="entry name" value="TRANSCRIPTION FACTOR GATA FAMILY MEMBER"/>
    <property type="match status" value="1"/>
</dbReference>
<dbReference type="Pfam" id="PF00320">
    <property type="entry name" value="GATA"/>
    <property type="match status" value="2"/>
</dbReference>
<dbReference type="PIRSF" id="PIRSF003027">
    <property type="entry name" value="TF_GATA-1/2/3"/>
    <property type="match status" value="1"/>
</dbReference>
<dbReference type="PRINTS" id="PR00619">
    <property type="entry name" value="GATAZNFINGER"/>
</dbReference>
<dbReference type="SMART" id="SM00401">
    <property type="entry name" value="ZnF_GATA"/>
    <property type="match status" value="2"/>
</dbReference>
<dbReference type="SUPFAM" id="SSF57716">
    <property type="entry name" value="Glucocorticoid receptor-like (DNA-binding domain)"/>
    <property type="match status" value="2"/>
</dbReference>
<dbReference type="PROSITE" id="PS00344">
    <property type="entry name" value="GATA_ZN_FINGER_1"/>
    <property type="match status" value="2"/>
</dbReference>
<dbReference type="PROSITE" id="PS50114">
    <property type="entry name" value="GATA_ZN_FINGER_2"/>
    <property type="match status" value="2"/>
</dbReference>
<gene>
    <name type="primary">gata3</name>
    <name type="synonym">gta3</name>
</gene>
<accession>Q91428</accession>
<organism>
    <name type="scientific">Danio rerio</name>
    <name type="common">Zebrafish</name>
    <name type="synonym">Brachydanio rerio</name>
    <dbReference type="NCBI Taxonomy" id="7955"/>
    <lineage>
        <taxon>Eukaryota</taxon>
        <taxon>Metazoa</taxon>
        <taxon>Chordata</taxon>
        <taxon>Craniata</taxon>
        <taxon>Vertebrata</taxon>
        <taxon>Euteleostomi</taxon>
        <taxon>Actinopterygii</taxon>
        <taxon>Neopterygii</taxon>
        <taxon>Teleostei</taxon>
        <taxon>Ostariophysi</taxon>
        <taxon>Cypriniformes</taxon>
        <taxon>Danionidae</taxon>
        <taxon>Danioninae</taxon>
        <taxon>Danio</taxon>
    </lineage>
</organism>